<comment type="function">
    <text evidence="1">Component of the cytochrome b6-f complex, which mediates electron transfer between photosystem II (PSII) and photosystem I (PSI), cyclic electron flow around PSI, and state transitions.</text>
</comment>
<comment type="cofactor">
    <cofactor evidence="1">
        <name>heme b</name>
        <dbReference type="ChEBI" id="CHEBI:60344"/>
    </cofactor>
    <text evidence="1">Binds 2 heme b groups non-covalently with two histidine residues as axial ligands.</text>
</comment>
<comment type="cofactor">
    <cofactor evidence="1">
        <name>heme c</name>
        <dbReference type="ChEBI" id="CHEBI:61717"/>
    </cofactor>
    <text evidence="1">Binds one heme group covalently by a single cysteine link with no axial amino acid ligand. This heme was named heme ci.</text>
</comment>
<comment type="subunit">
    <text evidence="1">The 4 large subunits of the cytochrome b6-f complex are cytochrome b6, subunit IV (17 kDa polypeptide, PetD), cytochrome f and the Rieske protein, while the 4 small subunits are PetG, PetL, PetM and PetN. The complex functions as a dimer.</text>
</comment>
<comment type="subcellular location">
    <subcellularLocation>
        <location evidence="1">Cellular thylakoid membrane</location>
        <topology evidence="1">Multi-pass membrane protein</topology>
    </subcellularLocation>
</comment>
<comment type="miscellaneous">
    <text evidence="1">Heme 1 (or BH or b566) is high-potential and absorbs at about 566 nm, and heme 2 (or BL or b562) is low-potential and absorbs at about 562 nm.</text>
</comment>
<comment type="similarity">
    <text evidence="1">Belongs to the cytochrome b family. PetB subfamily.</text>
</comment>
<protein>
    <recommendedName>
        <fullName evidence="1">Cytochrome b6</fullName>
    </recommendedName>
</protein>
<evidence type="ECO:0000255" key="1">
    <source>
        <dbReference type="HAMAP-Rule" id="MF_00633"/>
    </source>
</evidence>
<keyword id="KW-0249">Electron transport</keyword>
<keyword id="KW-0349">Heme</keyword>
<keyword id="KW-0408">Iron</keyword>
<keyword id="KW-0472">Membrane</keyword>
<keyword id="KW-0479">Metal-binding</keyword>
<keyword id="KW-0602">Photosynthesis</keyword>
<keyword id="KW-1185">Reference proteome</keyword>
<keyword id="KW-0793">Thylakoid</keyword>
<keyword id="KW-0812">Transmembrane</keyword>
<keyword id="KW-1133">Transmembrane helix</keyword>
<keyword id="KW-0813">Transport</keyword>
<reference key="1">
    <citation type="submission" date="2005-08" db="EMBL/GenBank/DDBJ databases">
        <title>Complete sequence of Synechococcus sp. CC9902.</title>
        <authorList>
            <person name="Copeland A."/>
            <person name="Lucas S."/>
            <person name="Lapidus A."/>
            <person name="Barry K."/>
            <person name="Detter J.C."/>
            <person name="Glavina T."/>
            <person name="Hammon N."/>
            <person name="Israni S."/>
            <person name="Pitluck S."/>
            <person name="Martinez M."/>
            <person name="Schmutz J."/>
            <person name="Larimer F."/>
            <person name="Land M."/>
            <person name="Kyrpides N."/>
            <person name="Ivanova N."/>
            <person name="Richardson P."/>
        </authorList>
    </citation>
    <scope>NUCLEOTIDE SEQUENCE [LARGE SCALE GENOMIC DNA]</scope>
    <source>
        <strain>CC9902</strain>
    </source>
</reference>
<dbReference type="EMBL" id="CP000097">
    <property type="protein sequence ID" value="ABB26806.1"/>
    <property type="molecule type" value="Genomic_DNA"/>
</dbReference>
<dbReference type="RefSeq" id="WP_009789041.1">
    <property type="nucleotide sequence ID" value="NC_007513.1"/>
</dbReference>
<dbReference type="SMR" id="Q3AUX3"/>
<dbReference type="STRING" id="316279.Syncc9902_1849"/>
<dbReference type="KEGG" id="sye:Syncc9902_1849"/>
<dbReference type="eggNOG" id="COG1290">
    <property type="taxonomic scope" value="Bacteria"/>
</dbReference>
<dbReference type="HOGENOM" id="CLU_031114_0_2_3"/>
<dbReference type="OrthoDB" id="9804503at2"/>
<dbReference type="Proteomes" id="UP000002712">
    <property type="component" value="Chromosome"/>
</dbReference>
<dbReference type="GO" id="GO:0031676">
    <property type="term" value="C:plasma membrane-derived thylakoid membrane"/>
    <property type="evidence" value="ECO:0007669"/>
    <property type="project" value="UniProtKB-SubCell"/>
</dbReference>
<dbReference type="GO" id="GO:0045158">
    <property type="term" value="F:electron transporter, transferring electrons within cytochrome b6/f complex of photosystem II activity"/>
    <property type="evidence" value="ECO:0007669"/>
    <property type="project" value="UniProtKB-UniRule"/>
</dbReference>
<dbReference type="GO" id="GO:0046872">
    <property type="term" value="F:metal ion binding"/>
    <property type="evidence" value="ECO:0007669"/>
    <property type="project" value="UniProtKB-KW"/>
</dbReference>
<dbReference type="GO" id="GO:0016491">
    <property type="term" value="F:oxidoreductase activity"/>
    <property type="evidence" value="ECO:0007669"/>
    <property type="project" value="InterPro"/>
</dbReference>
<dbReference type="GO" id="GO:0015979">
    <property type="term" value="P:photosynthesis"/>
    <property type="evidence" value="ECO:0007669"/>
    <property type="project" value="UniProtKB-UniRule"/>
</dbReference>
<dbReference type="GO" id="GO:0022904">
    <property type="term" value="P:respiratory electron transport chain"/>
    <property type="evidence" value="ECO:0007669"/>
    <property type="project" value="InterPro"/>
</dbReference>
<dbReference type="CDD" id="cd00284">
    <property type="entry name" value="Cytochrome_b_N"/>
    <property type="match status" value="1"/>
</dbReference>
<dbReference type="FunFam" id="1.20.810.10:FF:000001">
    <property type="entry name" value="Cytochrome b6"/>
    <property type="match status" value="1"/>
</dbReference>
<dbReference type="Gene3D" id="1.20.810.10">
    <property type="entry name" value="Cytochrome Bc1 Complex, Chain C"/>
    <property type="match status" value="1"/>
</dbReference>
<dbReference type="HAMAP" id="MF_00633">
    <property type="entry name" value="Cytb6_f_cytb6"/>
    <property type="match status" value="1"/>
</dbReference>
<dbReference type="InterPro" id="IPR005797">
    <property type="entry name" value="Cyt_b/b6_N"/>
</dbReference>
<dbReference type="InterPro" id="IPR023530">
    <property type="entry name" value="Cyt_B6_PetB"/>
</dbReference>
<dbReference type="InterPro" id="IPR027387">
    <property type="entry name" value="Cytb/b6-like_sf"/>
</dbReference>
<dbReference type="InterPro" id="IPR048259">
    <property type="entry name" value="Cytochrome_b_N_euk/bac"/>
</dbReference>
<dbReference type="InterPro" id="IPR016174">
    <property type="entry name" value="Di-haem_cyt_TM"/>
</dbReference>
<dbReference type="NCBIfam" id="NF002990">
    <property type="entry name" value="PRK03735.1"/>
    <property type="match status" value="1"/>
</dbReference>
<dbReference type="PANTHER" id="PTHR19271">
    <property type="entry name" value="CYTOCHROME B"/>
    <property type="match status" value="1"/>
</dbReference>
<dbReference type="PANTHER" id="PTHR19271:SF16">
    <property type="entry name" value="CYTOCHROME B"/>
    <property type="match status" value="1"/>
</dbReference>
<dbReference type="Pfam" id="PF00033">
    <property type="entry name" value="Cytochrome_B"/>
    <property type="match status" value="1"/>
</dbReference>
<dbReference type="PIRSF" id="PIRSF000032">
    <property type="entry name" value="Cytochrome_b6"/>
    <property type="match status" value="1"/>
</dbReference>
<dbReference type="SUPFAM" id="SSF81342">
    <property type="entry name" value="Transmembrane di-heme cytochromes"/>
    <property type="match status" value="1"/>
</dbReference>
<dbReference type="PROSITE" id="PS51002">
    <property type="entry name" value="CYTB_NTER"/>
    <property type="match status" value="1"/>
</dbReference>
<gene>
    <name evidence="1" type="primary">petB</name>
    <name type="ordered locus">Syncc9902_1849</name>
</gene>
<proteinExistence type="inferred from homology"/>
<organism>
    <name type="scientific">Synechococcus sp. (strain CC9902)</name>
    <dbReference type="NCBI Taxonomy" id="316279"/>
    <lineage>
        <taxon>Bacteria</taxon>
        <taxon>Bacillati</taxon>
        <taxon>Cyanobacteriota</taxon>
        <taxon>Cyanophyceae</taxon>
        <taxon>Synechococcales</taxon>
        <taxon>Synechococcaceae</taxon>
        <taxon>Synechococcus</taxon>
    </lineage>
</organism>
<sequence length="218" mass="24639">MANSSPVYDWFQERLEIQDIADDIGTKYVPPHVNIFYCLGGITLVCFLIQFATGFAMTFYYKPTVAEAYTSVQYLMTDVSFGWLIRSVHRWSASMMVLMLILHVFRVYLTGGFKRPRELTWVTGVTMAVITVSFGVTGYSLPWDQVGYWAVKIVSGVPAAIPVVGDFMVELLRGGESVGQATLTRFYSLHTFVMPWLLAVFMLMHFLMIRKQGISGPL</sequence>
<accession>Q3AUX3</accession>
<name>CYB6_SYNS9</name>
<feature type="chain" id="PRO_1000061419" description="Cytochrome b6">
    <location>
        <begin position="1"/>
        <end position="218"/>
    </location>
</feature>
<feature type="transmembrane region" description="Helical" evidence="1">
    <location>
        <begin position="35"/>
        <end position="55"/>
    </location>
</feature>
<feature type="transmembrane region" description="Helical" evidence="1">
    <location>
        <begin position="93"/>
        <end position="113"/>
    </location>
</feature>
<feature type="transmembrane region" description="Helical" evidence="1">
    <location>
        <begin position="119"/>
        <end position="139"/>
    </location>
</feature>
<feature type="transmembrane region" description="Helical" evidence="1">
    <location>
        <begin position="189"/>
        <end position="209"/>
    </location>
</feature>
<feature type="binding site" description="covalent" evidence="1">
    <location>
        <position position="38"/>
    </location>
    <ligand>
        <name>heme c</name>
        <dbReference type="ChEBI" id="CHEBI:61717"/>
    </ligand>
</feature>
<feature type="binding site" description="axial binding residue" evidence="1">
    <location>
        <position position="89"/>
    </location>
    <ligand>
        <name>heme b</name>
        <dbReference type="ChEBI" id="CHEBI:60344"/>
        <label>2</label>
    </ligand>
    <ligandPart>
        <name>Fe</name>
        <dbReference type="ChEBI" id="CHEBI:18248"/>
    </ligandPart>
</feature>
<feature type="binding site" description="axial binding residue" evidence="1">
    <location>
        <position position="103"/>
    </location>
    <ligand>
        <name>heme b</name>
        <dbReference type="ChEBI" id="CHEBI:60344"/>
        <label>1</label>
    </ligand>
    <ligandPart>
        <name>Fe</name>
        <dbReference type="ChEBI" id="CHEBI:18248"/>
    </ligandPart>
</feature>
<feature type="binding site" description="axial binding residue" evidence="1">
    <location>
        <position position="190"/>
    </location>
    <ligand>
        <name>heme b</name>
        <dbReference type="ChEBI" id="CHEBI:60344"/>
        <label>2</label>
    </ligand>
    <ligandPart>
        <name>Fe</name>
        <dbReference type="ChEBI" id="CHEBI:18248"/>
    </ligandPart>
</feature>
<feature type="binding site" description="axial binding residue" evidence="1">
    <location>
        <position position="205"/>
    </location>
    <ligand>
        <name>heme b</name>
        <dbReference type="ChEBI" id="CHEBI:60344"/>
        <label>1</label>
    </ligand>
    <ligandPart>
        <name>Fe</name>
        <dbReference type="ChEBI" id="CHEBI:18248"/>
    </ligandPart>
</feature>